<dbReference type="EMBL" id="AAFW02000048">
    <property type="protein sequence ID" value="EDN62999.1"/>
    <property type="status" value="ALT_INIT"/>
    <property type="molecule type" value="Genomic_DNA"/>
</dbReference>
<dbReference type="BMRB" id="A6ZQX9"/>
<dbReference type="SMR" id="A6ZQX9"/>
<dbReference type="HOGENOM" id="CLU_126134_1_0_1"/>
<dbReference type="OrthoDB" id="41495at4893"/>
<dbReference type="Proteomes" id="UP000007060">
    <property type="component" value="Unassembled WGS sequence"/>
</dbReference>
<dbReference type="GO" id="GO:0005634">
    <property type="term" value="C:nucleus"/>
    <property type="evidence" value="ECO:0007669"/>
    <property type="project" value="UniProtKB-SubCell"/>
</dbReference>
<dbReference type="InterPro" id="IPR019098">
    <property type="entry name" value="Histone_chaperone_domain_CHZ"/>
</dbReference>
<dbReference type="Pfam" id="PF09649">
    <property type="entry name" value="CHZ"/>
    <property type="match status" value="1"/>
</dbReference>
<dbReference type="SMART" id="SM01082">
    <property type="entry name" value="CHZ"/>
    <property type="match status" value="1"/>
</dbReference>
<feature type="initiator methionine" description="Removed" evidence="2">
    <location>
        <position position="1"/>
    </location>
</feature>
<feature type="chain" id="PRO_0000330222" description="Histone H2A.Z-specific chaperone CHZ1">
    <location>
        <begin position="2"/>
        <end position="160"/>
    </location>
</feature>
<feature type="region of interest" description="Disordered" evidence="3">
    <location>
        <begin position="1"/>
        <end position="160"/>
    </location>
</feature>
<feature type="region of interest" description="Important for H2A.Z-H2B binding">
    <location>
        <begin position="87"/>
        <end position="108"/>
    </location>
</feature>
<feature type="compositionally biased region" description="Basic and acidic residues" evidence="3">
    <location>
        <begin position="1"/>
        <end position="29"/>
    </location>
</feature>
<feature type="compositionally biased region" description="Polar residues" evidence="3">
    <location>
        <begin position="56"/>
        <end position="65"/>
    </location>
</feature>
<feature type="compositionally biased region" description="Acidic residues" evidence="3">
    <location>
        <begin position="84"/>
        <end position="94"/>
    </location>
</feature>
<feature type="compositionally biased region" description="Basic and acidic residues" evidence="3">
    <location>
        <begin position="110"/>
        <end position="138"/>
    </location>
</feature>
<feature type="compositionally biased region" description="Acidic residues" evidence="3">
    <location>
        <begin position="139"/>
        <end position="160"/>
    </location>
</feature>
<feature type="modified residue" description="N-acetylserine" evidence="2">
    <location>
        <position position="2"/>
    </location>
</feature>
<feature type="modified residue" description="Phosphoserine" evidence="2">
    <location>
        <position position="68"/>
    </location>
</feature>
<feature type="modified residue" description="Phosphoserine" evidence="2">
    <location>
        <position position="70"/>
    </location>
</feature>
<accession>A6ZQX9</accession>
<evidence type="ECO:0000250" key="1"/>
<evidence type="ECO:0000250" key="2">
    <source>
        <dbReference type="UniProtKB" id="P40019"/>
    </source>
</evidence>
<evidence type="ECO:0000256" key="3">
    <source>
        <dbReference type="SAM" id="MobiDB-lite"/>
    </source>
</evidence>
<evidence type="ECO:0000305" key="4"/>
<organism>
    <name type="scientific">Saccharomyces cerevisiae (strain YJM789)</name>
    <name type="common">Baker's yeast</name>
    <dbReference type="NCBI Taxonomy" id="307796"/>
    <lineage>
        <taxon>Eukaryota</taxon>
        <taxon>Fungi</taxon>
        <taxon>Dikarya</taxon>
        <taxon>Ascomycota</taxon>
        <taxon>Saccharomycotina</taxon>
        <taxon>Saccharomycetes</taxon>
        <taxon>Saccharomycetales</taxon>
        <taxon>Saccharomycetaceae</taxon>
        <taxon>Saccharomyces</taxon>
    </lineage>
</organism>
<gene>
    <name type="primary">CHZ1</name>
    <name type="ORF">SCY_1526</name>
</gene>
<protein>
    <recommendedName>
        <fullName>Histone H2A.Z-specific chaperone CHZ1</fullName>
    </recommendedName>
</protein>
<comment type="function">
    <text evidence="1">Forms a chaperone-bound H2A.Z-H2B complex that acts as a source for SWR1 complex-dependent H2A to H2A.Z histone replacement in chromatin.</text>
</comment>
<comment type="subunit">
    <text evidence="1">Forms a heterotrimer with H2A.Z-H2B, stabilizing the association of the histone dimer. Also, with a lower affinity, forms a heterotrimer with H2A-H2B (By similarity).</text>
</comment>
<comment type="subcellular location">
    <subcellularLocation>
        <location evidence="1">Nucleus</location>
    </subcellularLocation>
</comment>
<comment type="similarity">
    <text evidence="4">Belongs to the CHZ1 family.</text>
</comment>
<comment type="sequence caution" evidence="4">
    <conflict type="erroneous initiation">
        <sequence resource="EMBL-CDS" id="EDN62999"/>
    </conflict>
</comment>
<reference key="1">
    <citation type="journal article" date="2007" name="Proc. Natl. Acad. Sci. U.S.A.">
        <title>Genome sequencing and comparative analysis of Saccharomyces cerevisiae strain YJM789.</title>
        <authorList>
            <person name="Wei W."/>
            <person name="McCusker J.H."/>
            <person name="Hyman R.W."/>
            <person name="Jones T."/>
            <person name="Ning Y."/>
            <person name="Cao Z."/>
            <person name="Gu Z."/>
            <person name="Bruno D."/>
            <person name="Miranda M."/>
            <person name="Nguyen M."/>
            <person name="Wilhelmy J."/>
            <person name="Komp C."/>
            <person name="Tamse R."/>
            <person name="Wang X."/>
            <person name="Jia P."/>
            <person name="Luedi P."/>
            <person name="Oefner P.J."/>
            <person name="David L."/>
            <person name="Dietrich F.S."/>
            <person name="Li Y."/>
            <person name="Davis R.W."/>
            <person name="Steinmetz L.M."/>
        </authorList>
    </citation>
    <scope>NUCLEOTIDE SEQUENCE [LARGE SCALE GENOMIC DNA]</scope>
    <source>
        <strain>YJM789</strain>
    </source>
</reference>
<name>CHZ1_YEAS7</name>
<sequence length="160" mass="18409">MSDEAKEKRELESQKESSHNKSEKSVEPKPKRRRRRNYDDYDAEVAKEETKAKNGLTKSENNGTVEDSESDMDDAKLDALMGNEGEEEEDDLAEIDTSNIITSGRRTRGKVIDYKKTAEELDKKEPSTDSKDDVGYGEKEEDEEDEEDEEDEEDDDFKEQ</sequence>
<proteinExistence type="inferred from homology"/>
<keyword id="KW-0007">Acetylation</keyword>
<keyword id="KW-0143">Chaperone</keyword>
<keyword id="KW-0539">Nucleus</keyword>
<keyword id="KW-0597">Phosphoprotein</keyword>